<name>CLPP_ALIF1</name>
<reference key="1">
    <citation type="journal article" date="2005" name="Proc. Natl. Acad. Sci. U.S.A.">
        <title>Complete genome sequence of Vibrio fischeri: a symbiotic bacterium with pathogenic congeners.</title>
        <authorList>
            <person name="Ruby E.G."/>
            <person name="Urbanowski M."/>
            <person name="Campbell J."/>
            <person name="Dunn A."/>
            <person name="Faini M."/>
            <person name="Gunsalus R."/>
            <person name="Lostroh P."/>
            <person name="Lupp C."/>
            <person name="McCann J."/>
            <person name="Millikan D."/>
            <person name="Schaefer A."/>
            <person name="Stabb E."/>
            <person name="Stevens A."/>
            <person name="Visick K."/>
            <person name="Whistler C."/>
            <person name="Greenberg E.P."/>
        </authorList>
    </citation>
    <scope>NUCLEOTIDE SEQUENCE [LARGE SCALE GENOMIC DNA]</scope>
    <source>
        <strain>ATCC 700601 / ES114</strain>
    </source>
</reference>
<organism>
    <name type="scientific">Aliivibrio fischeri (strain ATCC 700601 / ES114)</name>
    <name type="common">Vibrio fischeri</name>
    <dbReference type="NCBI Taxonomy" id="312309"/>
    <lineage>
        <taxon>Bacteria</taxon>
        <taxon>Pseudomonadati</taxon>
        <taxon>Pseudomonadota</taxon>
        <taxon>Gammaproteobacteria</taxon>
        <taxon>Vibrionales</taxon>
        <taxon>Vibrionaceae</taxon>
        <taxon>Aliivibrio</taxon>
    </lineage>
</organism>
<dbReference type="EC" id="3.4.21.92" evidence="1"/>
<dbReference type="EMBL" id="CP000020">
    <property type="protein sequence ID" value="AAW85291.1"/>
    <property type="molecule type" value="Genomic_DNA"/>
</dbReference>
<dbReference type="RefSeq" id="WP_005418252.1">
    <property type="nucleotide sequence ID" value="NZ_CAWLES010000001.1"/>
</dbReference>
<dbReference type="RefSeq" id="YP_204179.1">
    <property type="nucleotide sequence ID" value="NC_006840.2"/>
</dbReference>
<dbReference type="SMR" id="Q5E6Q5"/>
<dbReference type="STRING" id="312309.VF_0796"/>
<dbReference type="MEROPS" id="S14.001"/>
<dbReference type="EnsemblBacteria" id="AAW85291">
    <property type="protein sequence ID" value="AAW85291"/>
    <property type="gene ID" value="VF_0796"/>
</dbReference>
<dbReference type="GeneID" id="54163464"/>
<dbReference type="KEGG" id="vfi:VF_0796"/>
<dbReference type="PATRIC" id="fig|312309.11.peg.788"/>
<dbReference type="eggNOG" id="COG0740">
    <property type="taxonomic scope" value="Bacteria"/>
</dbReference>
<dbReference type="HOGENOM" id="CLU_058707_3_2_6"/>
<dbReference type="OrthoDB" id="9802800at2"/>
<dbReference type="Proteomes" id="UP000000537">
    <property type="component" value="Chromosome I"/>
</dbReference>
<dbReference type="GO" id="GO:0005737">
    <property type="term" value="C:cytoplasm"/>
    <property type="evidence" value="ECO:0007669"/>
    <property type="project" value="UniProtKB-SubCell"/>
</dbReference>
<dbReference type="GO" id="GO:0009368">
    <property type="term" value="C:endopeptidase Clp complex"/>
    <property type="evidence" value="ECO:0007669"/>
    <property type="project" value="TreeGrafter"/>
</dbReference>
<dbReference type="GO" id="GO:0004176">
    <property type="term" value="F:ATP-dependent peptidase activity"/>
    <property type="evidence" value="ECO:0007669"/>
    <property type="project" value="InterPro"/>
</dbReference>
<dbReference type="GO" id="GO:0051117">
    <property type="term" value="F:ATPase binding"/>
    <property type="evidence" value="ECO:0007669"/>
    <property type="project" value="TreeGrafter"/>
</dbReference>
<dbReference type="GO" id="GO:0004252">
    <property type="term" value="F:serine-type endopeptidase activity"/>
    <property type="evidence" value="ECO:0007669"/>
    <property type="project" value="UniProtKB-UniRule"/>
</dbReference>
<dbReference type="GO" id="GO:0006515">
    <property type="term" value="P:protein quality control for misfolded or incompletely synthesized proteins"/>
    <property type="evidence" value="ECO:0007669"/>
    <property type="project" value="TreeGrafter"/>
</dbReference>
<dbReference type="CDD" id="cd07017">
    <property type="entry name" value="S14_ClpP_2"/>
    <property type="match status" value="1"/>
</dbReference>
<dbReference type="FunFam" id="3.90.226.10:FF:000001">
    <property type="entry name" value="ATP-dependent Clp protease proteolytic subunit"/>
    <property type="match status" value="1"/>
</dbReference>
<dbReference type="Gene3D" id="3.90.226.10">
    <property type="entry name" value="2-enoyl-CoA Hydratase, Chain A, domain 1"/>
    <property type="match status" value="1"/>
</dbReference>
<dbReference type="HAMAP" id="MF_00444">
    <property type="entry name" value="ClpP"/>
    <property type="match status" value="1"/>
</dbReference>
<dbReference type="InterPro" id="IPR001907">
    <property type="entry name" value="ClpP"/>
</dbReference>
<dbReference type="InterPro" id="IPR029045">
    <property type="entry name" value="ClpP/crotonase-like_dom_sf"/>
</dbReference>
<dbReference type="InterPro" id="IPR023562">
    <property type="entry name" value="ClpP/TepA"/>
</dbReference>
<dbReference type="InterPro" id="IPR033135">
    <property type="entry name" value="ClpP_His_AS"/>
</dbReference>
<dbReference type="InterPro" id="IPR018215">
    <property type="entry name" value="ClpP_Ser_AS"/>
</dbReference>
<dbReference type="NCBIfam" id="TIGR00493">
    <property type="entry name" value="clpP"/>
    <property type="match status" value="1"/>
</dbReference>
<dbReference type="NCBIfam" id="NF001368">
    <property type="entry name" value="PRK00277.1"/>
    <property type="match status" value="1"/>
</dbReference>
<dbReference type="NCBIfam" id="NF009205">
    <property type="entry name" value="PRK12553.1"/>
    <property type="match status" value="1"/>
</dbReference>
<dbReference type="PANTHER" id="PTHR10381">
    <property type="entry name" value="ATP-DEPENDENT CLP PROTEASE PROTEOLYTIC SUBUNIT"/>
    <property type="match status" value="1"/>
</dbReference>
<dbReference type="PANTHER" id="PTHR10381:SF70">
    <property type="entry name" value="ATP-DEPENDENT CLP PROTEASE PROTEOLYTIC SUBUNIT"/>
    <property type="match status" value="1"/>
</dbReference>
<dbReference type="Pfam" id="PF00574">
    <property type="entry name" value="CLP_protease"/>
    <property type="match status" value="1"/>
</dbReference>
<dbReference type="PRINTS" id="PR00127">
    <property type="entry name" value="CLPPROTEASEP"/>
</dbReference>
<dbReference type="SUPFAM" id="SSF52096">
    <property type="entry name" value="ClpP/crotonase"/>
    <property type="match status" value="1"/>
</dbReference>
<dbReference type="PROSITE" id="PS00382">
    <property type="entry name" value="CLP_PROTEASE_HIS"/>
    <property type="match status" value="1"/>
</dbReference>
<dbReference type="PROSITE" id="PS00381">
    <property type="entry name" value="CLP_PROTEASE_SER"/>
    <property type="match status" value="1"/>
</dbReference>
<sequence>MSYQENNAMPSIMDALVPMVVEQTSRGERSYDIYSRLLKERVIFLTGQVEDHMANLVVAQLLFLESENPDKDIFLYINSPGGSVTAGMSIYDTMQFIKPNVSTVCMGQACSMGAFLLAGGAPGKRYVLPNSRVMIHQPLGGFQGQASDIQIHAQEILTIKKKLNTLLAEHTGQPLEVIEQDTDRDNFMSADDAVKYGLVDAVLNKRD</sequence>
<keyword id="KW-0963">Cytoplasm</keyword>
<keyword id="KW-0378">Hydrolase</keyword>
<keyword id="KW-0645">Protease</keyword>
<keyword id="KW-1185">Reference proteome</keyword>
<keyword id="KW-0720">Serine protease</keyword>
<accession>Q5E6Q5</accession>
<evidence type="ECO:0000255" key="1">
    <source>
        <dbReference type="HAMAP-Rule" id="MF_00444"/>
    </source>
</evidence>
<proteinExistence type="inferred from homology"/>
<protein>
    <recommendedName>
        <fullName evidence="1">ATP-dependent Clp protease proteolytic subunit</fullName>
        <ecNumber evidence="1">3.4.21.92</ecNumber>
    </recommendedName>
    <alternativeName>
        <fullName evidence="1">Endopeptidase Clp</fullName>
    </alternativeName>
</protein>
<feature type="chain" id="PRO_0000179711" description="ATP-dependent Clp protease proteolytic subunit">
    <location>
        <begin position="1"/>
        <end position="207"/>
    </location>
</feature>
<feature type="active site" description="Nucleophile" evidence="1">
    <location>
        <position position="111"/>
    </location>
</feature>
<feature type="active site" evidence="1">
    <location>
        <position position="136"/>
    </location>
</feature>
<gene>
    <name evidence="1" type="primary">clpP</name>
    <name type="ordered locus">VF_0796</name>
</gene>
<comment type="function">
    <text evidence="1">Cleaves peptides in various proteins in a process that requires ATP hydrolysis. Has a chymotrypsin-like activity. Plays a major role in the degradation of misfolded proteins.</text>
</comment>
<comment type="catalytic activity">
    <reaction evidence="1">
        <text>Hydrolysis of proteins to small peptides in the presence of ATP and magnesium. alpha-casein is the usual test substrate. In the absence of ATP, only oligopeptides shorter than five residues are hydrolyzed (such as succinyl-Leu-Tyr-|-NHMec, and Leu-Tyr-Leu-|-Tyr-Trp, in which cleavage of the -Tyr-|-Leu- and -Tyr-|-Trp bonds also occurs).</text>
        <dbReference type="EC" id="3.4.21.92"/>
    </reaction>
</comment>
<comment type="subunit">
    <text evidence="1">Fourteen ClpP subunits assemble into 2 heptameric rings which stack back to back to give a disk-like structure with a central cavity, resembling the structure of eukaryotic proteasomes.</text>
</comment>
<comment type="subcellular location">
    <subcellularLocation>
        <location evidence="1">Cytoplasm</location>
    </subcellularLocation>
</comment>
<comment type="similarity">
    <text evidence="1">Belongs to the peptidase S14 family.</text>
</comment>